<organism>
    <name type="scientific">Escherichia coli O157:H7 (strain EC4115 / EHEC)</name>
    <dbReference type="NCBI Taxonomy" id="444450"/>
    <lineage>
        <taxon>Bacteria</taxon>
        <taxon>Pseudomonadati</taxon>
        <taxon>Pseudomonadota</taxon>
        <taxon>Gammaproteobacteria</taxon>
        <taxon>Enterobacterales</taxon>
        <taxon>Enterobacteriaceae</taxon>
        <taxon>Escherichia</taxon>
    </lineage>
</organism>
<feature type="chain" id="PRO_1000125717" description="Glucose-6-phosphate isomerase">
    <location>
        <begin position="1"/>
        <end position="549"/>
    </location>
</feature>
<feature type="active site" description="Proton donor" evidence="1">
    <location>
        <position position="355"/>
    </location>
</feature>
<feature type="active site" evidence="1">
    <location>
        <position position="386"/>
    </location>
</feature>
<feature type="active site" evidence="1">
    <location>
        <position position="514"/>
    </location>
</feature>
<feature type="modified residue" description="N6-acetyllysine" evidence="1">
    <location>
        <position position="80"/>
    </location>
</feature>
<feature type="modified residue" description="N6-acetyllysine" evidence="1">
    <location>
        <position position="228"/>
    </location>
</feature>
<feature type="modified residue" description="N6-acetyllysine" evidence="1">
    <location>
        <position position="234"/>
    </location>
</feature>
<dbReference type="EC" id="5.3.1.9" evidence="1"/>
<dbReference type="EMBL" id="CP001164">
    <property type="protein sequence ID" value="ACI38060.1"/>
    <property type="molecule type" value="Genomic_DNA"/>
</dbReference>
<dbReference type="RefSeq" id="WP_000789986.1">
    <property type="nucleotide sequence ID" value="NC_011353.1"/>
</dbReference>
<dbReference type="SMR" id="B5Z0C4"/>
<dbReference type="GeneID" id="93777863"/>
<dbReference type="KEGG" id="ecf:ECH74115_5504"/>
<dbReference type="HOGENOM" id="CLU_017947_3_1_6"/>
<dbReference type="UniPathway" id="UPA00109">
    <property type="reaction ID" value="UER00181"/>
</dbReference>
<dbReference type="UniPathway" id="UPA00138"/>
<dbReference type="GO" id="GO:0005829">
    <property type="term" value="C:cytosol"/>
    <property type="evidence" value="ECO:0007669"/>
    <property type="project" value="TreeGrafter"/>
</dbReference>
<dbReference type="GO" id="GO:0097367">
    <property type="term" value="F:carbohydrate derivative binding"/>
    <property type="evidence" value="ECO:0007669"/>
    <property type="project" value="InterPro"/>
</dbReference>
<dbReference type="GO" id="GO:0004347">
    <property type="term" value="F:glucose-6-phosphate isomerase activity"/>
    <property type="evidence" value="ECO:0007669"/>
    <property type="project" value="UniProtKB-UniRule"/>
</dbReference>
<dbReference type="GO" id="GO:0048029">
    <property type="term" value="F:monosaccharide binding"/>
    <property type="evidence" value="ECO:0007669"/>
    <property type="project" value="TreeGrafter"/>
</dbReference>
<dbReference type="GO" id="GO:0006094">
    <property type="term" value="P:gluconeogenesis"/>
    <property type="evidence" value="ECO:0007669"/>
    <property type="project" value="UniProtKB-UniRule"/>
</dbReference>
<dbReference type="GO" id="GO:0051156">
    <property type="term" value="P:glucose 6-phosphate metabolic process"/>
    <property type="evidence" value="ECO:0007669"/>
    <property type="project" value="TreeGrafter"/>
</dbReference>
<dbReference type="GO" id="GO:0006096">
    <property type="term" value="P:glycolytic process"/>
    <property type="evidence" value="ECO:0007669"/>
    <property type="project" value="UniProtKB-UniRule"/>
</dbReference>
<dbReference type="CDD" id="cd05015">
    <property type="entry name" value="SIS_PGI_1"/>
    <property type="match status" value="1"/>
</dbReference>
<dbReference type="CDD" id="cd05016">
    <property type="entry name" value="SIS_PGI_2"/>
    <property type="match status" value="1"/>
</dbReference>
<dbReference type="FunFam" id="1.10.1390.10:FF:000001">
    <property type="entry name" value="Glucose-6-phosphate isomerase"/>
    <property type="match status" value="1"/>
</dbReference>
<dbReference type="FunFam" id="3.40.50.10490:FF:000004">
    <property type="entry name" value="Glucose-6-phosphate isomerase"/>
    <property type="match status" value="1"/>
</dbReference>
<dbReference type="Gene3D" id="1.10.1390.10">
    <property type="match status" value="1"/>
</dbReference>
<dbReference type="Gene3D" id="3.40.50.10490">
    <property type="entry name" value="Glucose-6-phosphate isomerase like protein, domain 1"/>
    <property type="match status" value="2"/>
</dbReference>
<dbReference type="HAMAP" id="MF_00473">
    <property type="entry name" value="G6P_isomerase"/>
    <property type="match status" value="1"/>
</dbReference>
<dbReference type="InterPro" id="IPR001672">
    <property type="entry name" value="G6P_Isomerase"/>
</dbReference>
<dbReference type="InterPro" id="IPR023096">
    <property type="entry name" value="G6P_Isomerase_C"/>
</dbReference>
<dbReference type="InterPro" id="IPR018189">
    <property type="entry name" value="Phosphoglucose_isomerase_CS"/>
</dbReference>
<dbReference type="InterPro" id="IPR046348">
    <property type="entry name" value="SIS_dom_sf"/>
</dbReference>
<dbReference type="InterPro" id="IPR035476">
    <property type="entry name" value="SIS_PGI_1"/>
</dbReference>
<dbReference type="InterPro" id="IPR035482">
    <property type="entry name" value="SIS_PGI_2"/>
</dbReference>
<dbReference type="NCBIfam" id="NF001211">
    <property type="entry name" value="PRK00179.1"/>
    <property type="match status" value="1"/>
</dbReference>
<dbReference type="PANTHER" id="PTHR11469">
    <property type="entry name" value="GLUCOSE-6-PHOSPHATE ISOMERASE"/>
    <property type="match status" value="1"/>
</dbReference>
<dbReference type="PANTHER" id="PTHR11469:SF1">
    <property type="entry name" value="GLUCOSE-6-PHOSPHATE ISOMERASE"/>
    <property type="match status" value="1"/>
</dbReference>
<dbReference type="Pfam" id="PF00342">
    <property type="entry name" value="PGI"/>
    <property type="match status" value="1"/>
</dbReference>
<dbReference type="PRINTS" id="PR00662">
    <property type="entry name" value="G6PISOMERASE"/>
</dbReference>
<dbReference type="SUPFAM" id="SSF53697">
    <property type="entry name" value="SIS domain"/>
    <property type="match status" value="1"/>
</dbReference>
<dbReference type="PROSITE" id="PS00765">
    <property type="entry name" value="P_GLUCOSE_ISOMERASE_1"/>
    <property type="match status" value="1"/>
</dbReference>
<dbReference type="PROSITE" id="PS00174">
    <property type="entry name" value="P_GLUCOSE_ISOMERASE_2"/>
    <property type="match status" value="1"/>
</dbReference>
<dbReference type="PROSITE" id="PS51463">
    <property type="entry name" value="P_GLUCOSE_ISOMERASE_3"/>
    <property type="match status" value="1"/>
</dbReference>
<proteinExistence type="inferred from homology"/>
<reference key="1">
    <citation type="journal article" date="2011" name="Proc. Natl. Acad. Sci. U.S.A.">
        <title>Genomic anatomy of Escherichia coli O157:H7 outbreaks.</title>
        <authorList>
            <person name="Eppinger M."/>
            <person name="Mammel M.K."/>
            <person name="Leclerc J.E."/>
            <person name="Ravel J."/>
            <person name="Cebula T.A."/>
        </authorList>
    </citation>
    <scope>NUCLEOTIDE SEQUENCE [LARGE SCALE GENOMIC DNA]</scope>
    <source>
        <strain>EC4115 / EHEC</strain>
    </source>
</reference>
<comment type="function">
    <text evidence="1">Catalyzes the reversible isomerization of glucose-6-phosphate to fructose-6-phosphate.</text>
</comment>
<comment type="catalytic activity">
    <reaction evidence="1">
        <text>alpha-D-glucose 6-phosphate = beta-D-fructose 6-phosphate</text>
        <dbReference type="Rhea" id="RHEA:11816"/>
        <dbReference type="ChEBI" id="CHEBI:57634"/>
        <dbReference type="ChEBI" id="CHEBI:58225"/>
        <dbReference type="EC" id="5.3.1.9"/>
    </reaction>
</comment>
<comment type="pathway">
    <text evidence="1">Carbohydrate biosynthesis; gluconeogenesis.</text>
</comment>
<comment type="pathway">
    <text evidence="1">Carbohydrate degradation; glycolysis; D-glyceraldehyde 3-phosphate and glycerone phosphate from D-glucose: step 2/4.</text>
</comment>
<comment type="subcellular location">
    <subcellularLocation>
        <location evidence="1">Cytoplasm</location>
    </subcellularLocation>
</comment>
<comment type="similarity">
    <text evidence="1">Belongs to the GPI family.</text>
</comment>
<name>G6PI_ECO5E</name>
<gene>
    <name evidence="1" type="primary">pgi</name>
    <name type="ordered locus">ECH74115_5504</name>
</gene>
<accession>B5Z0C4</accession>
<sequence length="549" mass="61530">MKNINPTQTAAWQALQKHFDEMKDVTIADLFAKDGDRFSKFSATFDDQMLVDYSKNRITEETLAKLQDLAKECDLAGAIKSMFSGEKINRTENRAVLHVALRNRSNTPILVDGKDVMPEVNAVLEKMKTFSEAIISGEWKGYTGKAITDVVNIGIGGSDLGPYMVTEALRPYKNHLNMHFVSNVDGTHIAEVLKKVNPETTLFLVASKTFTTQETMTNAHSARDWFLKAAGDEKHVAKHFAALSTNAKAVGEFGIDTANMFEFWDWVGGRYSLWSAIGLSIVLSIGFDNFVELLSGAHAMDKHFSTTPAEKNLPVLLALIGIWYNNFFGAETEAILPYDQYMHRFAAYFQQGNMESNGKYVDRNGNVVDYQTGPIIWGEPGTNGQHAFYQLIHQGTKMVPCDFIAPAITHNPLSDHHQKLLSNFFAQTEALAFGKSREVVEQEYRDQGKDPATLDYVVPFKVFEGNRPTNSILLREITPFSLGALIALYEHKIFTQGVILNIFTFDQWGVELGKQLANRILPELKDDKEISSHDSSTNGLINRYKAWRG</sequence>
<protein>
    <recommendedName>
        <fullName evidence="1">Glucose-6-phosphate isomerase</fullName>
        <shortName evidence="1">GPI</shortName>
        <ecNumber evidence="1">5.3.1.9</ecNumber>
    </recommendedName>
    <alternativeName>
        <fullName evidence="1">Phosphoglucose isomerase</fullName>
        <shortName evidence="1">PGI</shortName>
    </alternativeName>
    <alternativeName>
        <fullName evidence="1">Phosphohexose isomerase</fullName>
        <shortName evidence="1">PHI</shortName>
    </alternativeName>
</protein>
<keyword id="KW-0007">Acetylation</keyword>
<keyword id="KW-0963">Cytoplasm</keyword>
<keyword id="KW-0312">Gluconeogenesis</keyword>
<keyword id="KW-0324">Glycolysis</keyword>
<keyword id="KW-0413">Isomerase</keyword>
<evidence type="ECO:0000255" key="1">
    <source>
        <dbReference type="HAMAP-Rule" id="MF_00473"/>
    </source>
</evidence>